<organism>
    <name type="scientific">Streptococcus pneumoniae (strain JJA)</name>
    <dbReference type="NCBI Taxonomy" id="488222"/>
    <lineage>
        <taxon>Bacteria</taxon>
        <taxon>Bacillati</taxon>
        <taxon>Bacillota</taxon>
        <taxon>Bacilli</taxon>
        <taxon>Lactobacillales</taxon>
        <taxon>Streptococcaceae</taxon>
        <taxon>Streptococcus</taxon>
    </lineage>
</organism>
<evidence type="ECO:0000255" key="1">
    <source>
        <dbReference type="HAMAP-Rule" id="MF_01567"/>
    </source>
</evidence>
<gene>
    <name type="ordered locus">SPJ_0333</name>
</gene>
<dbReference type="EMBL" id="CP000919">
    <property type="protein sequence ID" value="ACO19296.1"/>
    <property type="molecule type" value="Genomic_DNA"/>
</dbReference>
<dbReference type="RefSeq" id="WP_000743618.1">
    <property type="nucleotide sequence ID" value="NC_012466.1"/>
</dbReference>
<dbReference type="SMR" id="C1CCB4"/>
<dbReference type="KEGG" id="sjj:SPJ_0333"/>
<dbReference type="HOGENOM" id="CLU_046981_0_0_9"/>
<dbReference type="Proteomes" id="UP000002206">
    <property type="component" value="Chromosome"/>
</dbReference>
<dbReference type="Gene3D" id="1.20.1570.10">
    <property type="entry name" value="dip2346 domain like"/>
    <property type="match status" value="1"/>
</dbReference>
<dbReference type="Gene3D" id="3.10.630.10">
    <property type="entry name" value="dip2346 domain like"/>
    <property type="match status" value="1"/>
</dbReference>
<dbReference type="Gene3D" id="3.40.140.40">
    <property type="entry name" value="Domain of unknown function (DUF1846), C-terminal subdomain"/>
    <property type="match status" value="1"/>
</dbReference>
<dbReference type="HAMAP" id="MF_01567">
    <property type="entry name" value="UPF0371"/>
    <property type="match status" value="1"/>
</dbReference>
<dbReference type="InterPro" id="IPR014999">
    <property type="entry name" value="DUF1846"/>
</dbReference>
<dbReference type="InterPro" id="IPR048441">
    <property type="entry name" value="DUF1846_C"/>
</dbReference>
<dbReference type="InterPro" id="IPR048496">
    <property type="entry name" value="DUF1846_N"/>
</dbReference>
<dbReference type="NCBIfam" id="NF010184">
    <property type="entry name" value="PRK13663.1"/>
    <property type="match status" value="1"/>
</dbReference>
<dbReference type="Pfam" id="PF08903">
    <property type="entry name" value="DUF1846"/>
    <property type="match status" value="1"/>
</dbReference>
<dbReference type="Pfam" id="PF20921">
    <property type="entry name" value="DUF1846_C"/>
    <property type="match status" value="1"/>
</dbReference>
<dbReference type="PIRSF" id="PIRSF033132">
    <property type="entry name" value="DUF1846"/>
    <property type="match status" value="1"/>
</dbReference>
<name>Y333_STRZJ</name>
<reference key="1">
    <citation type="journal article" date="2010" name="Genome Biol.">
        <title>Structure and dynamics of the pan-genome of Streptococcus pneumoniae and closely related species.</title>
        <authorList>
            <person name="Donati C."/>
            <person name="Hiller N.L."/>
            <person name="Tettelin H."/>
            <person name="Muzzi A."/>
            <person name="Croucher N.J."/>
            <person name="Angiuoli S.V."/>
            <person name="Oggioni M."/>
            <person name="Dunning Hotopp J.C."/>
            <person name="Hu F.Z."/>
            <person name="Riley D.R."/>
            <person name="Covacci A."/>
            <person name="Mitchell T.J."/>
            <person name="Bentley S.D."/>
            <person name="Kilian M."/>
            <person name="Ehrlich G.D."/>
            <person name="Rappuoli R."/>
            <person name="Moxon E.R."/>
            <person name="Masignani V."/>
        </authorList>
    </citation>
    <scope>NUCLEOTIDE SEQUENCE [LARGE SCALE GENOMIC DNA]</scope>
    <source>
        <strain>JJA</strain>
    </source>
</reference>
<proteinExistence type="inferred from homology"/>
<feature type="chain" id="PRO_1000185465" description="UPF0371 protein SPJ_0333">
    <location>
        <begin position="1"/>
        <end position="494"/>
    </location>
</feature>
<accession>C1CCB4</accession>
<sequence>MKKQAFSSEQYLNLQRDHILERINQFDGKLYLEFGGKMLEDFHAARVLPGYEPDNKIKLLQELKEQVEVVIAINASNIEHSKARGDLGISYDQEVLRLIDKFNELGIFVGSVVITQYAGQPAADAFRNQLEKNGIDSYLHYPIKGYPTDMDHIISPEGMGKNDYIKTSRNLIVVTAPGPGSGKLATCMSNMYHDQINGIKSGYAKFETFPVWNLPLHHPVNLAYEAATADLDDVNMIDPFHLQTYGETTVNYNRDIEIFPVLKSMLERILGKSPYASPTDMGVNMVGFAITDDEAAVEASKQEIIRRYYQTVLDFKAEKVSEAAVKKIELLMNDLGITPADRKVAVVARQKAEETGGPALAFELPNGEIVTGKNSELFGPTAAALINAIKKSADIAKEVKLIEPEVVKPIQGLKIDHLGSRNPRLHSNEILIALAITATENPDAARAMEELGNLKGSEAHSTIILTDEDKNVLRKLGINVTFDPYYQYDRLYRK</sequence>
<comment type="similarity">
    <text evidence="1">Belongs to the UPF0371 family.</text>
</comment>
<protein>
    <recommendedName>
        <fullName evidence="1">UPF0371 protein SPJ_0333</fullName>
    </recommendedName>
</protein>